<sequence length="226" mass="22914">MSVLVVTGTGTGIGKTVATAALACHARLHGIDVAVCKPVQTGTRDGDDDLAEVARLAGVTELHSLARFPEPLAPLAAARRSGAELPTRAQILDLITAADRPGRLTLVEGAGGLLVEIASDGSTLRDVAADLGAPVLTVVAPGLGTLNHTVLTLEALAHRQISSAGLVIGAWPAQPGVAEIDNRDALSRLAPVRAALPAGAGSLGRADFERLSVDAFDPSWVEGLAA</sequence>
<organism>
    <name type="scientific">Mycolicibacterium vanbaalenii (strain DSM 7251 / JCM 13017 / BCRC 16820 / KCTC 9966 / NRRL B-24157 / PYR-1)</name>
    <name type="common">Mycobacterium vanbaalenii</name>
    <dbReference type="NCBI Taxonomy" id="350058"/>
    <lineage>
        <taxon>Bacteria</taxon>
        <taxon>Bacillati</taxon>
        <taxon>Actinomycetota</taxon>
        <taxon>Actinomycetes</taxon>
        <taxon>Mycobacteriales</taxon>
        <taxon>Mycobacteriaceae</taxon>
        <taxon>Mycolicibacterium</taxon>
    </lineage>
</organism>
<reference key="1">
    <citation type="submission" date="2006-12" db="EMBL/GenBank/DDBJ databases">
        <title>Complete sequence of Mycobacterium vanbaalenii PYR-1.</title>
        <authorList>
            <consortium name="US DOE Joint Genome Institute"/>
            <person name="Copeland A."/>
            <person name="Lucas S."/>
            <person name="Lapidus A."/>
            <person name="Barry K."/>
            <person name="Detter J.C."/>
            <person name="Glavina del Rio T."/>
            <person name="Hammon N."/>
            <person name="Israni S."/>
            <person name="Dalin E."/>
            <person name="Tice H."/>
            <person name="Pitluck S."/>
            <person name="Singan V."/>
            <person name="Schmutz J."/>
            <person name="Larimer F."/>
            <person name="Land M."/>
            <person name="Hauser L."/>
            <person name="Kyrpides N."/>
            <person name="Anderson I.J."/>
            <person name="Miller C."/>
            <person name="Richardson P."/>
        </authorList>
    </citation>
    <scope>NUCLEOTIDE SEQUENCE [LARGE SCALE GENOMIC DNA]</scope>
    <source>
        <strain>DSM 7251 / JCM 13017 / BCRC 16820 / KCTC 9966 / NRRL B-24157 / PYR-1</strain>
    </source>
</reference>
<keyword id="KW-0067">ATP-binding</keyword>
<keyword id="KW-0093">Biotin biosynthesis</keyword>
<keyword id="KW-0963">Cytoplasm</keyword>
<keyword id="KW-0436">Ligase</keyword>
<keyword id="KW-0460">Magnesium</keyword>
<keyword id="KW-0479">Metal-binding</keyword>
<keyword id="KW-0547">Nucleotide-binding</keyword>
<feature type="chain" id="PRO_0000302531" description="ATP-dependent dethiobiotin synthetase BioD">
    <location>
        <begin position="1"/>
        <end position="226"/>
    </location>
</feature>
<feature type="active site" evidence="1">
    <location>
        <position position="37"/>
    </location>
</feature>
<feature type="binding site" evidence="1">
    <location>
        <begin position="12"/>
        <end position="17"/>
    </location>
    <ligand>
        <name>ATP</name>
        <dbReference type="ChEBI" id="CHEBI:30616"/>
    </ligand>
</feature>
<feature type="binding site" evidence="1">
    <location>
        <position position="16"/>
    </location>
    <ligand>
        <name>Mg(2+)</name>
        <dbReference type="ChEBI" id="CHEBI:18420"/>
    </ligand>
</feature>
<feature type="binding site" evidence="1">
    <location>
        <position position="41"/>
    </location>
    <ligand>
        <name>substrate</name>
    </ligand>
</feature>
<feature type="binding site" evidence="1">
    <location>
        <position position="49"/>
    </location>
    <ligand>
        <name>ATP</name>
        <dbReference type="ChEBI" id="CHEBI:30616"/>
    </ligand>
</feature>
<feature type="binding site" evidence="1">
    <location>
        <position position="49"/>
    </location>
    <ligand>
        <name>Mg(2+)</name>
        <dbReference type="ChEBI" id="CHEBI:18420"/>
    </ligand>
</feature>
<feature type="binding site" evidence="1">
    <location>
        <begin position="108"/>
        <end position="111"/>
    </location>
    <ligand>
        <name>ATP</name>
        <dbReference type="ChEBI" id="CHEBI:30616"/>
    </ligand>
</feature>
<feature type="binding site" evidence="1">
    <location>
        <position position="108"/>
    </location>
    <ligand>
        <name>Mg(2+)</name>
        <dbReference type="ChEBI" id="CHEBI:18420"/>
    </ligand>
</feature>
<feature type="binding site" evidence="1">
    <location>
        <begin position="197"/>
        <end position="199"/>
    </location>
    <ligand>
        <name>ATP</name>
        <dbReference type="ChEBI" id="CHEBI:30616"/>
    </ligand>
</feature>
<protein>
    <recommendedName>
        <fullName evidence="1">ATP-dependent dethiobiotin synthetase BioD</fullName>
        <ecNumber evidence="1">6.3.3.3</ecNumber>
    </recommendedName>
    <alternativeName>
        <fullName evidence="1">DTB synthetase</fullName>
        <shortName evidence="1">DTBS</shortName>
    </alternativeName>
    <alternativeName>
        <fullName evidence="1">Dethiobiotin synthase</fullName>
    </alternativeName>
</protein>
<name>BIOD_MYCVP</name>
<dbReference type="EC" id="6.3.3.3" evidence="1"/>
<dbReference type="EMBL" id="CP000511">
    <property type="protein sequence ID" value="ABM13597.1"/>
    <property type="molecule type" value="Genomic_DNA"/>
</dbReference>
<dbReference type="RefSeq" id="WP_011780005.1">
    <property type="nucleotide sequence ID" value="NC_008726.1"/>
</dbReference>
<dbReference type="SMR" id="A1T8U7"/>
<dbReference type="STRING" id="350058.Mvan_2790"/>
<dbReference type="KEGG" id="mva:Mvan_2790"/>
<dbReference type="eggNOG" id="COG0132">
    <property type="taxonomic scope" value="Bacteria"/>
</dbReference>
<dbReference type="HOGENOM" id="CLU_072551_1_0_11"/>
<dbReference type="UniPathway" id="UPA00078">
    <property type="reaction ID" value="UER00161"/>
</dbReference>
<dbReference type="Proteomes" id="UP000009159">
    <property type="component" value="Chromosome"/>
</dbReference>
<dbReference type="GO" id="GO:0005829">
    <property type="term" value="C:cytosol"/>
    <property type="evidence" value="ECO:0007669"/>
    <property type="project" value="TreeGrafter"/>
</dbReference>
<dbReference type="GO" id="GO:0005524">
    <property type="term" value="F:ATP binding"/>
    <property type="evidence" value="ECO:0007669"/>
    <property type="project" value="UniProtKB-UniRule"/>
</dbReference>
<dbReference type="GO" id="GO:0004141">
    <property type="term" value="F:dethiobiotin synthase activity"/>
    <property type="evidence" value="ECO:0007669"/>
    <property type="project" value="UniProtKB-UniRule"/>
</dbReference>
<dbReference type="GO" id="GO:0000287">
    <property type="term" value="F:magnesium ion binding"/>
    <property type="evidence" value="ECO:0007669"/>
    <property type="project" value="UniProtKB-UniRule"/>
</dbReference>
<dbReference type="GO" id="GO:0009102">
    <property type="term" value="P:biotin biosynthetic process"/>
    <property type="evidence" value="ECO:0007669"/>
    <property type="project" value="UniProtKB-UniRule"/>
</dbReference>
<dbReference type="CDD" id="cd03109">
    <property type="entry name" value="DTBS"/>
    <property type="match status" value="1"/>
</dbReference>
<dbReference type="Gene3D" id="3.40.50.300">
    <property type="entry name" value="P-loop containing nucleotide triphosphate hydrolases"/>
    <property type="match status" value="1"/>
</dbReference>
<dbReference type="HAMAP" id="MF_00336">
    <property type="entry name" value="BioD"/>
    <property type="match status" value="1"/>
</dbReference>
<dbReference type="InterPro" id="IPR004472">
    <property type="entry name" value="DTB_synth_BioD"/>
</dbReference>
<dbReference type="InterPro" id="IPR027417">
    <property type="entry name" value="P-loop_NTPase"/>
</dbReference>
<dbReference type="InterPro" id="IPR002347">
    <property type="entry name" value="SDR_fam"/>
</dbReference>
<dbReference type="NCBIfam" id="TIGR00347">
    <property type="entry name" value="bioD"/>
    <property type="match status" value="1"/>
</dbReference>
<dbReference type="PANTHER" id="PTHR43210">
    <property type="entry name" value="DETHIOBIOTIN SYNTHETASE"/>
    <property type="match status" value="1"/>
</dbReference>
<dbReference type="PANTHER" id="PTHR43210:SF5">
    <property type="entry name" value="DETHIOBIOTIN SYNTHETASE"/>
    <property type="match status" value="1"/>
</dbReference>
<dbReference type="Pfam" id="PF13500">
    <property type="entry name" value="AAA_26"/>
    <property type="match status" value="1"/>
</dbReference>
<dbReference type="PIRSF" id="PIRSF006755">
    <property type="entry name" value="DTB_synth"/>
    <property type="match status" value="1"/>
</dbReference>
<dbReference type="PRINTS" id="PR00081">
    <property type="entry name" value="GDHRDH"/>
</dbReference>
<dbReference type="SUPFAM" id="SSF52540">
    <property type="entry name" value="P-loop containing nucleoside triphosphate hydrolases"/>
    <property type="match status" value="1"/>
</dbReference>
<gene>
    <name evidence="1" type="primary">bioD</name>
    <name type="ordered locus">Mvan_2790</name>
</gene>
<comment type="function">
    <text evidence="1">Catalyzes a mechanistically unusual reaction, the ATP-dependent insertion of CO2 between the N7 and N8 nitrogen atoms of 7,8-diaminopelargonic acid (DAPA, also called 7,8-diammoniononanoate) to form a ureido ring.</text>
</comment>
<comment type="catalytic activity">
    <reaction evidence="1">
        <text>(7R,8S)-7,8-diammoniononanoate + CO2 + ATP = (4R,5S)-dethiobiotin + ADP + phosphate + 3 H(+)</text>
        <dbReference type="Rhea" id="RHEA:15805"/>
        <dbReference type="ChEBI" id="CHEBI:15378"/>
        <dbReference type="ChEBI" id="CHEBI:16526"/>
        <dbReference type="ChEBI" id="CHEBI:30616"/>
        <dbReference type="ChEBI" id="CHEBI:43474"/>
        <dbReference type="ChEBI" id="CHEBI:149469"/>
        <dbReference type="ChEBI" id="CHEBI:149473"/>
        <dbReference type="ChEBI" id="CHEBI:456216"/>
        <dbReference type="EC" id="6.3.3.3"/>
    </reaction>
</comment>
<comment type="cofactor">
    <cofactor evidence="1">
        <name>Mg(2+)</name>
        <dbReference type="ChEBI" id="CHEBI:18420"/>
    </cofactor>
</comment>
<comment type="pathway">
    <text evidence="1">Cofactor biosynthesis; biotin biosynthesis; biotin from 7,8-diaminononanoate: step 1/2.</text>
</comment>
<comment type="subunit">
    <text evidence="1">Homodimer.</text>
</comment>
<comment type="subcellular location">
    <subcellularLocation>
        <location evidence="1">Cytoplasm</location>
    </subcellularLocation>
</comment>
<comment type="similarity">
    <text evidence="1">Belongs to the dethiobiotin synthetase family.</text>
</comment>
<evidence type="ECO:0000255" key="1">
    <source>
        <dbReference type="HAMAP-Rule" id="MF_00336"/>
    </source>
</evidence>
<accession>A1T8U7</accession>
<proteinExistence type="inferred from homology"/>